<gene>
    <name evidence="1" type="primary">psaB</name>
</gene>
<evidence type="ECO:0000255" key="1">
    <source>
        <dbReference type="HAMAP-Rule" id="MF_00482"/>
    </source>
</evidence>
<keyword id="KW-0004">4Fe-4S</keyword>
<keyword id="KW-0148">Chlorophyll</keyword>
<keyword id="KW-0150">Chloroplast</keyword>
<keyword id="KW-0157">Chromophore</keyword>
<keyword id="KW-0249">Electron transport</keyword>
<keyword id="KW-0408">Iron</keyword>
<keyword id="KW-0411">Iron-sulfur</keyword>
<keyword id="KW-0460">Magnesium</keyword>
<keyword id="KW-0472">Membrane</keyword>
<keyword id="KW-0479">Metal-binding</keyword>
<keyword id="KW-0560">Oxidoreductase</keyword>
<keyword id="KW-0602">Photosynthesis</keyword>
<keyword id="KW-0603">Photosystem I</keyword>
<keyword id="KW-0934">Plastid</keyword>
<keyword id="KW-0793">Thylakoid</keyword>
<keyword id="KW-0812">Transmembrane</keyword>
<keyword id="KW-1133">Transmembrane helix</keyword>
<keyword id="KW-0813">Transport</keyword>
<dbReference type="EC" id="1.97.1.12" evidence="1"/>
<dbReference type="EMBL" id="AF041468">
    <property type="protein sequence ID" value="AAC35698.1"/>
    <property type="molecule type" value="Genomic_DNA"/>
</dbReference>
<dbReference type="RefSeq" id="NP_050764.1">
    <property type="nucleotide sequence ID" value="NC_000926.1"/>
</dbReference>
<dbReference type="SMR" id="O78507"/>
<dbReference type="GeneID" id="857072"/>
<dbReference type="HOGENOM" id="CLU_016126_1_0_1"/>
<dbReference type="OMA" id="EQWVADP"/>
<dbReference type="GO" id="GO:0009535">
    <property type="term" value="C:chloroplast thylakoid membrane"/>
    <property type="evidence" value="ECO:0007669"/>
    <property type="project" value="UniProtKB-SubCell"/>
</dbReference>
<dbReference type="GO" id="GO:0009522">
    <property type="term" value="C:photosystem I"/>
    <property type="evidence" value="ECO:0007669"/>
    <property type="project" value="UniProtKB-KW"/>
</dbReference>
<dbReference type="GO" id="GO:0051539">
    <property type="term" value="F:4 iron, 4 sulfur cluster binding"/>
    <property type="evidence" value="ECO:0007669"/>
    <property type="project" value="UniProtKB-KW"/>
</dbReference>
<dbReference type="GO" id="GO:0016168">
    <property type="term" value="F:chlorophyll binding"/>
    <property type="evidence" value="ECO:0007669"/>
    <property type="project" value="UniProtKB-KW"/>
</dbReference>
<dbReference type="GO" id="GO:0009055">
    <property type="term" value="F:electron transfer activity"/>
    <property type="evidence" value="ECO:0007669"/>
    <property type="project" value="UniProtKB-UniRule"/>
</dbReference>
<dbReference type="GO" id="GO:0000287">
    <property type="term" value="F:magnesium ion binding"/>
    <property type="evidence" value="ECO:0007669"/>
    <property type="project" value="UniProtKB-UniRule"/>
</dbReference>
<dbReference type="GO" id="GO:0016491">
    <property type="term" value="F:oxidoreductase activity"/>
    <property type="evidence" value="ECO:0007669"/>
    <property type="project" value="UniProtKB-KW"/>
</dbReference>
<dbReference type="GO" id="GO:0015979">
    <property type="term" value="P:photosynthesis"/>
    <property type="evidence" value="ECO:0007669"/>
    <property type="project" value="UniProtKB-UniRule"/>
</dbReference>
<dbReference type="FunFam" id="1.20.1130.10:FF:000001">
    <property type="entry name" value="Photosystem I P700 chlorophyll a apoprotein A2"/>
    <property type="match status" value="1"/>
</dbReference>
<dbReference type="Gene3D" id="1.20.1130.10">
    <property type="entry name" value="Photosystem I PsaA/PsaB"/>
    <property type="match status" value="1"/>
</dbReference>
<dbReference type="HAMAP" id="MF_00482">
    <property type="entry name" value="PSI_PsaB"/>
    <property type="match status" value="1"/>
</dbReference>
<dbReference type="InterPro" id="IPR001280">
    <property type="entry name" value="PSI_PsaA/B"/>
</dbReference>
<dbReference type="InterPro" id="IPR020586">
    <property type="entry name" value="PSI_PsaA/B_CS"/>
</dbReference>
<dbReference type="InterPro" id="IPR036408">
    <property type="entry name" value="PSI_PsaA/B_sf"/>
</dbReference>
<dbReference type="InterPro" id="IPR006244">
    <property type="entry name" value="PSI_PsaB"/>
</dbReference>
<dbReference type="NCBIfam" id="TIGR01336">
    <property type="entry name" value="psaB"/>
    <property type="match status" value="1"/>
</dbReference>
<dbReference type="PANTHER" id="PTHR30128">
    <property type="entry name" value="OUTER MEMBRANE PROTEIN, OMPA-RELATED"/>
    <property type="match status" value="1"/>
</dbReference>
<dbReference type="PANTHER" id="PTHR30128:SF19">
    <property type="entry name" value="PHOTOSYSTEM I P700 CHLOROPHYLL A APOPROTEIN A1-RELATED"/>
    <property type="match status" value="1"/>
</dbReference>
<dbReference type="Pfam" id="PF00223">
    <property type="entry name" value="PsaA_PsaB"/>
    <property type="match status" value="1"/>
</dbReference>
<dbReference type="PIRSF" id="PIRSF002905">
    <property type="entry name" value="PSI_A"/>
    <property type="match status" value="1"/>
</dbReference>
<dbReference type="PRINTS" id="PR00257">
    <property type="entry name" value="PHOTSYSPSAAB"/>
</dbReference>
<dbReference type="SUPFAM" id="SSF81558">
    <property type="entry name" value="Photosystem I subunits PsaA/PsaB"/>
    <property type="match status" value="1"/>
</dbReference>
<dbReference type="PROSITE" id="PS00419">
    <property type="entry name" value="PHOTOSYSTEM_I_PSAAB"/>
    <property type="match status" value="1"/>
</dbReference>
<reference key="1">
    <citation type="journal article" date="1999" name="J. Mol. Evol.">
        <title>The plastid genome of the cryptophyte alga, Guillardia theta: complete sequence and conserved synteny groups confirm its common ancestry with red algae.</title>
        <authorList>
            <person name="Douglas S.E."/>
            <person name="Penny S.L."/>
        </authorList>
    </citation>
    <scope>NUCLEOTIDE SEQUENCE [LARGE SCALE GENOMIC DNA]</scope>
</reference>
<protein>
    <recommendedName>
        <fullName evidence="1">Photosystem I P700 chlorophyll a apoprotein A2</fullName>
        <ecNumber evidence="1">1.97.1.12</ecNumber>
    </recommendedName>
    <alternativeName>
        <fullName evidence="1">PSI-B</fullName>
    </alternativeName>
    <alternativeName>
        <fullName evidence="1">PsaB</fullName>
    </alternativeName>
</protein>
<name>PSAB_GUITH</name>
<proteinExistence type="inferred from homology"/>
<organism>
    <name type="scientific">Guillardia theta</name>
    <name type="common">Cryptophyte</name>
    <name type="synonym">Cryptomonas phi</name>
    <dbReference type="NCBI Taxonomy" id="55529"/>
    <lineage>
        <taxon>Eukaryota</taxon>
        <taxon>Cryptophyceae</taxon>
        <taxon>Pyrenomonadales</taxon>
        <taxon>Geminigeraceae</taxon>
        <taxon>Guillardia</taxon>
    </lineage>
</organism>
<geneLocation type="chloroplast"/>
<comment type="function">
    <text evidence="1">PsaA and PsaB bind P700, the primary electron donor of photosystem I (PSI), as well as the electron acceptors A0, A1 and FX. PSI is a plastocyanin/cytochrome c6-ferredoxin oxidoreductase, converting photonic excitation into a charge separation, which transfers an electron from the donor P700 chlorophyll pair to the spectroscopically characterized acceptors A0, A1, FX, FA and FB in turn. Oxidized P700 is reduced on the lumenal side of the thylakoid membrane by plastocyanin or cytochrome c6.</text>
</comment>
<comment type="catalytic activity">
    <reaction evidence="1">
        <text>reduced [plastocyanin] + hnu + oxidized [2Fe-2S]-[ferredoxin] = oxidized [plastocyanin] + reduced [2Fe-2S]-[ferredoxin]</text>
        <dbReference type="Rhea" id="RHEA:30407"/>
        <dbReference type="Rhea" id="RHEA-COMP:10000"/>
        <dbReference type="Rhea" id="RHEA-COMP:10001"/>
        <dbReference type="Rhea" id="RHEA-COMP:10039"/>
        <dbReference type="Rhea" id="RHEA-COMP:10040"/>
        <dbReference type="ChEBI" id="CHEBI:29036"/>
        <dbReference type="ChEBI" id="CHEBI:30212"/>
        <dbReference type="ChEBI" id="CHEBI:33737"/>
        <dbReference type="ChEBI" id="CHEBI:33738"/>
        <dbReference type="ChEBI" id="CHEBI:49552"/>
        <dbReference type="EC" id="1.97.1.12"/>
    </reaction>
</comment>
<comment type="cofactor">
    <text evidence="1">P700 is a chlorophyll a/chlorophyll a' dimer, A0 is one or more chlorophyll a, A1 is one or both phylloquinones and FX is a shared 4Fe-4S iron-sulfur center.</text>
</comment>
<comment type="subunit">
    <text evidence="1">The PsaA/B heterodimer binds the P700 chlorophyll special pair and subsequent electron acceptors. PSI consists of a core antenna complex that captures photons, and an electron transfer chain that converts photonic excitation into a charge separation. The eukaryotic PSI reaction center is composed of at least 11 subunits.</text>
</comment>
<comment type="subcellular location">
    <subcellularLocation>
        <location evidence="1">Plastid</location>
        <location evidence="1">Chloroplast thylakoid membrane</location>
        <topology evidence="1">Multi-pass membrane protein</topology>
    </subcellularLocation>
</comment>
<comment type="similarity">
    <text evidence="1">Belongs to the PsaA/PsaB family.</text>
</comment>
<accession>O78507</accession>
<feature type="chain" id="PRO_0000088616" description="Photosystem I P700 chlorophyll a apoprotein A2">
    <location>
        <begin position="1"/>
        <end position="734"/>
    </location>
</feature>
<feature type="transmembrane region" description="Helical; Name=I" evidence="1">
    <location>
        <begin position="46"/>
        <end position="69"/>
    </location>
</feature>
<feature type="transmembrane region" description="Helical; Name=II" evidence="1">
    <location>
        <begin position="135"/>
        <end position="158"/>
    </location>
</feature>
<feature type="transmembrane region" description="Helical; Name=III" evidence="1">
    <location>
        <begin position="175"/>
        <end position="199"/>
    </location>
</feature>
<feature type="transmembrane region" description="Helical; Name=IV" evidence="1">
    <location>
        <begin position="273"/>
        <end position="291"/>
    </location>
</feature>
<feature type="transmembrane region" description="Helical; Name=V" evidence="1">
    <location>
        <begin position="330"/>
        <end position="353"/>
    </location>
</feature>
<feature type="transmembrane region" description="Helical; Name=VI" evidence="1">
    <location>
        <begin position="369"/>
        <end position="395"/>
    </location>
</feature>
<feature type="transmembrane region" description="Helical; Name=VII" evidence="1">
    <location>
        <begin position="417"/>
        <end position="439"/>
    </location>
</feature>
<feature type="transmembrane region" description="Helical; Name=VIII" evidence="1">
    <location>
        <begin position="517"/>
        <end position="535"/>
    </location>
</feature>
<feature type="transmembrane region" description="Helical; Name=IX" evidence="1">
    <location>
        <begin position="575"/>
        <end position="596"/>
    </location>
</feature>
<feature type="transmembrane region" description="Helical; Name=X" evidence="1">
    <location>
        <begin position="643"/>
        <end position="665"/>
    </location>
</feature>
<feature type="transmembrane region" description="Helical; Name=XI" evidence="1">
    <location>
        <begin position="707"/>
        <end position="727"/>
    </location>
</feature>
<feature type="binding site" evidence="1">
    <location>
        <position position="559"/>
    </location>
    <ligand>
        <name>[4Fe-4S] cluster</name>
        <dbReference type="ChEBI" id="CHEBI:49883"/>
        <note>ligand shared between dimeric partners</note>
    </ligand>
</feature>
<feature type="binding site" evidence="1">
    <location>
        <position position="568"/>
    </location>
    <ligand>
        <name>[4Fe-4S] cluster</name>
        <dbReference type="ChEBI" id="CHEBI:49883"/>
        <note>ligand shared between dimeric partners</note>
    </ligand>
</feature>
<feature type="binding site" description="axial binding residue" evidence="1">
    <location>
        <position position="654"/>
    </location>
    <ligand>
        <name>chlorophyll a</name>
        <dbReference type="ChEBI" id="CHEBI:58416"/>
        <label>B1</label>
    </ligand>
    <ligandPart>
        <name>Mg</name>
        <dbReference type="ChEBI" id="CHEBI:25107"/>
    </ligandPart>
</feature>
<feature type="binding site" description="axial binding residue" evidence="1">
    <location>
        <position position="662"/>
    </location>
    <ligand>
        <name>chlorophyll a</name>
        <dbReference type="ChEBI" id="CHEBI:58416"/>
        <label>B3</label>
    </ligand>
    <ligandPart>
        <name>Mg</name>
        <dbReference type="ChEBI" id="CHEBI:25107"/>
    </ligandPart>
</feature>
<feature type="binding site" evidence="1">
    <location>
        <position position="670"/>
    </location>
    <ligand>
        <name>chlorophyll a</name>
        <dbReference type="ChEBI" id="CHEBI:58416"/>
        <label>B3</label>
    </ligand>
</feature>
<feature type="binding site" evidence="1">
    <location>
        <position position="671"/>
    </location>
    <ligand>
        <name>phylloquinone</name>
        <dbReference type="ChEBI" id="CHEBI:18067"/>
        <label>B</label>
    </ligand>
</feature>
<sequence length="734" mass="82329">MATKFPKFSQALAQDPATRRIWYGLATAHDFESHDGMTEENLYQKIFASHFGHLAIIFLWTSGNLFHVAWQGNFEQWVLNPLKVKPIAHAIWDPHFGQPAVKAFTKGGVSYPVNIATSGVYHWWYTIGMRTNNDLYSGSIFLLILASVMLFAGWLHLQPKFRPGLAWFKNNESRLNHHLSGLFGFSSVAWSGHLIHVAIPESRGLHVGWDNFTKVYPHPEGLKAFFTGNWSNYAANPDTADHIFGTTEGSGTAILTFLGGFHPQTQSLWLTDIAHHHLAIGVIFIFAGHMYRTNWGIGHSLKEILDAHRAPSGRLGNGHKGLFETISNSLHFQLGLALASLGVITSLVAQHMYALPSYAFIAKDYVTQAALYTHHQYIAGFLMVGAFAHGAIFFVRDYDPEQNKNNVLARMLEHKEAIISHLSWVSLFLGFHTLGLYVHNDVVVAFGTPEKQILVEPVFAQWIQASSGKAMYGFDVLLSANTSIAKNASSNIWLPGWLEAINSGKNSLFLPIGPGDFLVHHAIALALHTTTLILVKGALDARGSKLMPDKKDFGYSFPCDGPGRGGTCDISAWDAFYLSMFWMLNTIGWVTFYWHWKHVTIWQGNAGQFNESSTYIMGWLRDYLWLNSSPLINGYNPFGMNSLSVWAWMFLFGHLIWATGFMFLISWRGYWQELIETLVWAHERTPLANLVRWRDKPVALSIVQARLVGLVHFTVGYIFTYAAFVIASTAGKFG</sequence>